<sequence>MAHPVQLGFQDAASPIMEELLYFHDHTLMIMFLISSLVLYIISLMLTTKLTHTSTMDAQEVETVWTILPAAILILIALPSLRILYMMDEITSPSLTLKTMGHQWYWSYEYTDYENLCFDSYMTPCSDLKPGELRLLEVDNRVVLPTELSIRTLISSEDVLHSWTVPSLGVKTDAIPGRLNQATLMASRPGVYYGQCSEICGANHSFMPIVLELIPLKHFEEWLLFTL</sequence>
<reference key="1">
    <citation type="journal article" date="1994" name="J. Mol. Evol.">
        <title>Evolution of the primate cytochrome c oxidase subunit II gene.</title>
        <authorList>
            <person name="Adkins R.M."/>
            <person name="Honeycutt R.L."/>
        </authorList>
    </citation>
    <scope>NUCLEOTIDE SEQUENCE [GENOMIC DNA]</scope>
    <source>
        <strain>Rubra</strain>
    </source>
</reference>
<dbReference type="EC" id="7.1.1.9"/>
<dbReference type="EMBL" id="L22785">
    <property type="protein sequence ID" value="AAA20572.1"/>
    <property type="molecule type" value="Genomic_DNA"/>
</dbReference>
<dbReference type="PIR" id="I61846">
    <property type="entry name" value="I61846"/>
</dbReference>
<dbReference type="SMR" id="P98047"/>
<dbReference type="GO" id="GO:0005743">
    <property type="term" value="C:mitochondrial inner membrane"/>
    <property type="evidence" value="ECO:0007669"/>
    <property type="project" value="UniProtKB-SubCell"/>
</dbReference>
<dbReference type="GO" id="GO:0045277">
    <property type="term" value="C:respiratory chain complex IV"/>
    <property type="evidence" value="ECO:0000250"/>
    <property type="project" value="UniProtKB"/>
</dbReference>
<dbReference type="GO" id="GO:0005507">
    <property type="term" value="F:copper ion binding"/>
    <property type="evidence" value="ECO:0007669"/>
    <property type="project" value="InterPro"/>
</dbReference>
<dbReference type="GO" id="GO:0004129">
    <property type="term" value="F:cytochrome-c oxidase activity"/>
    <property type="evidence" value="ECO:0007669"/>
    <property type="project" value="UniProtKB-EC"/>
</dbReference>
<dbReference type="GO" id="GO:0042773">
    <property type="term" value="P:ATP synthesis coupled electron transport"/>
    <property type="evidence" value="ECO:0007669"/>
    <property type="project" value="TreeGrafter"/>
</dbReference>
<dbReference type="CDD" id="cd13912">
    <property type="entry name" value="CcO_II_C"/>
    <property type="match status" value="1"/>
</dbReference>
<dbReference type="FunFam" id="1.10.287.90:FF:000001">
    <property type="entry name" value="Cytochrome c oxidase subunit 2"/>
    <property type="match status" value="1"/>
</dbReference>
<dbReference type="FunFam" id="2.60.40.420:FF:000001">
    <property type="entry name" value="Cytochrome c oxidase subunit 2"/>
    <property type="match status" value="1"/>
</dbReference>
<dbReference type="Gene3D" id="1.10.287.90">
    <property type="match status" value="1"/>
</dbReference>
<dbReference type="Gene3D" id="2.60.40.420">
    <property type="entry name" value="Cupredoxins - blue copper proteins"/>
    <property type="match status" value="1"/>
</dbReference>
<dbReference type="InterPro" id="IPR045187">
    <property type="entry name" value="CcO_II"/>
</dbReference>
<dbReference type="InterPro" id="IPR002429">
    <property type="entry name" value="CcO_II-like_C"/>
</dbReference>
<dbReference type="InterPro" id="IPR034210">
    <property type="entry name" value="CcO_II_C"/>
</dbReference>
<dbReference type="InterPro" id="IPR001505">
    <property type="entry name" value="Copper_CuA"/>
</dbReference>
<dbReference type="InterPro" id="IPR008972">
    <property type="entry name" value="Cupredoxin"/>
</dbReference>
<dbReference type="InterPro" id="IPR014222">
    <property type="entry name" value="Cyt_c_oxidase_su2"/>
</dbReference>
<dbReference type="InterPro" id="IPR011759">
    <property type="entry name" value="Cyt_c_oxidase_su2_TM_dom"/>
</dbReference>
<dbReference type="InterPro" id="IPR036257">
    <property type="entry name" value="Cyt_c_oxidase_su2_TM_sf"/>
</dbReference>
<dbReference type="NCBIfam" id="TIGR02866">
    <property type="entry name" value="CoxB"/>
    <property type="match status" value="1"/>
</dbReference>
<dbReference type="PANTHER" id="PTHR22888:SF9">
    <property type="entry name" value="CYTOCHROME C OXIDASE SUBUNIT 2"/>
    <property type="match status" value="1"/>
</dbReference>
<dbReference type="PANTHER" id="PTHR22888">
    <property type="entry name" value="CYTOCHROME C OXIDASE, SUBUNIT II"/>
    <property type="match status" value="1"/>
</dbReference>
<dbReference type="Pfam" id="PF00116">
    <property type="entry name" value="COX2"/>
    <property type="match status" value="1"/>
</dbReference>
<dbReference type="Pfam" id="PF02790">
    <property type="entry name" value="COX2_TM"/>
    <property type="match status" value="1"/>
</dbReference>
<dbReference type="PRINTS" id="PR01166">
    <property type="entry name" value="CYCOXIDASEII"/>
</dbReference>
<dbReference type="SUPFAM" id="SSF49503">
    <property type="entry name" value="Cupredoxins"/>
    <property type="match status" value="1"/>
</dbReference>
<dbReference type="SUPFAM" id="SSF81464">
    <property type="entry name" value="Cytochrome c oxidase subunit II-like, transmembrane region"/>
    <property type="match status" value="1"/>
</dbReference>
<dbReference type="PROSITE" id="PS00078">
    <property type="entry name" value="COX2"/>
    <property type="match status" value="1"/>
</dbReference>
<dbReference type="PROSITE" id="PS50857">
    <property type="entry name" value="COX2_CUA"/>
    <property type="match status" value="1"/>
</dbReference>
<dbReference type="PROSITE" id="PS50999">
    <property type="entry name" value="COX2_TM"/>
    <property type="match status" value="1"/>
</dbReference>
<accession>P98047</accession>
<gene>
    <name type="primary">MT-CO2</name>
    <name type="synonym">COII</name>
    <name type="synonym">COXII</name>
    <name type="synonym">MTCO2</name>
</gene>
<proteinExistence type="inferred from homology"/>
<geneLocation type="mitochondrion"/>
<keyword id="KW-0186">Copper</keyword>
<keyword id="KW-0249">Electron transport</keyword>
<keyword id="KW-0460">Magnesium</keyword>
<keyword id="KW-0472">Membrane</keyword>
<keyword id="KW-0479">Metal-binding</keyword>
<keyword id="KW-0496">Mitochondrion</keyword>
<keyword id="KW-0999">Mitochondrion inner membrane</keyword>
<keyword id="KW-0679">Respiratory chain</keyword>
<keyword id="KW-1278">Translocase</keyword>
<keyword id="KW-0812">Transmembrane</keyword>
<keyword id="KW-1133">Transmembrane helix</keyword>
<keyword id="KW-0813">Transport</keyword>
<evidence type="ECO:0000250" key="1">
    <source>
        <dbReference type="UniProtKB" id="P00403"/>
    </source>
</evidence>
<evidence type="ECO:0000250" key="2">
    <source>
        <dbReference type="UniProtKB" id="P00410"/>
    </source>
</evidence>
<evidence type="ECO:0000250" key="3">
    <source>
        <dbReference type="UniProtKB" id="P68530"/>
    </source>
</evidence>
<evidence type="ECO:0000305" key="4"/>
<organism>
    <name type="scientific">Varecia variegata</name>
    <name type="common">Black-and-white ruffed lemur</name>
    <name type="synonym">Lemur variegatus</name>
    <dbReference type="NCBI Taxonomy" id="9455"/>
    <lineage>
        <taxon>Eukaryota</taxon>
        <taxon>Metazoa</taxon>
        <taxon>Chordata</taxon>
        <taxon>Craniata</taxon>
        <taxon>Vertebrata</taxon>
        <taxon>Euteleostomi</taxon>
        <taxon>Mammalia</taxon>
        <taxon>Eutheria</taxon>
        <taxon>Euarchontoglires</taxon>
        <taxon>Primates</taxon>
        <taxon>Strepsirrhini</taxon>
        <taxon>Lemuriformes</taxon>
        <taxon>Lemuridae</taxon>
        <taxon>Varecia</taxon>
    </lineage>
</organism>
<name>COX2_VARVI</name>
<feature type="chain" id="PRO_0000183618" description="Cytochrome c oxidase subunit 2">
    <location>
        <begin position="1"/>
        <end position="227"/>
    </location>
</feature>
<feature type="topological domain" description="Mitochondrial intermembrane" evidence="3">
    <location>
        <begin position="1"/>
        <end position="14"/>
    </location>
</feature>
<feature type="transmembrane region" description="Helical; Name=I" evidence="3">
    <location>
        <begin position="15"/>
        <end position="45"/>
    </location>
</feature>
<feature type="topological domain" description="Mitochondrial matrix" evidence="3">
    <location>
        <begin position="46"/>
        <end position="59"/>
    </location>
</feature>
<feature type="transmembrane region" description="Helical; Name=II" evidence="3">
    <location>
        <begin position="60"/>
        <end position="87"/>
    </location>
</feature>
<feature type="topological domain" description="Mitochondrial intermembrane" evidence="3">
    <location>
        <begin position="88"/>
        <end position="227"/>
    </location>
</feature>
<feature type="binding site" evidence="3">
    <location>
        <position position="161"/>
    </location>
    <ligand>
        <name>Cu cation</name>
        <dbReference type="ChEBI" id="CHEBI:23378"/>
        <label>A1</label>
    </ligand>
</feature>
<feature type="binding site" evidence="3">
    <location>
        <position position="196"/>
    </location>
    <ligand>
        <name>Cu cation</name>
        <dbReference type="ChEBI" id="CHEBI:23378"/>
        <label>A1</label>
    </ligand>
</feature>
<feature type="binding site" evidence="3">
    <location>
        <position position="196"/>
    </location>
    <ligand>
        <name>Cu cation</name>
        <dbReference type="ChEBI" id="CHEBI:23378"/>
        <label>A2</label>
    </ligand>
</feature>
<feature type="binding site" evidence="3">
    <location>
        <position position="198"/>
    </location>
    <ligand>
        <name>Cu cation</name>
        <dbReference type="ChEBI" id="CHEBI:23378"/>
        <label>A2</label>
    </ligand>
</feature>
<feature type="binding site" evidence="3">
    <location>
        <position position="198"/>
    </location>
    <ligand>
        <name>Mg(2+)</name>
        <dbReference type="ChEBI" id="CHEBI:18420"/>
        <note>ligand shared with MT-CO1</note>
    </ligand>
</feature>
<feature type="binding site" evidence="3">
    <location>
        <position position="200"/>
    </location>
    <ligand>
        <name>Cu cation</name>
        <dbReference type="ChEBI" id="CHEBI:23378"/>
        <label>A1</label>
    </ligand>
</feature>
<feature type="binding site" evidence="3">
    <location>
        <position position="200"/>
    </location>
    <ligand>
        <name>Cu cation</name>
        <dbReference type="ChEBI" id="CHEBI:23378"/>
        <label>A2</label>
    </ligand>
</feature>
<feature type="binding site" evidence="3">
    <location>
        <position position="204"/>
    </location>
    <ligand>
        <name>Cu cation</name>
        <dbReference type="ChEBI" id="CHEBI:23378"/>
        <label>A2</label>
    </ligand>
</feature>
<feature type="binding site" evidence="3">
    <location>
        <position position="207"/>
    </location>
    <ligand>
        <name>Cu cation</name>
        <dbReference type="ChEBI" id="CHEBI:23378"/>
        <label>A1</label>
    </ligand>
</feature>
<comment type="function">
    <text evidence="2">Component of the cytochrome c oxidase, the last enzyme in the mitochondrial electron transport chain which drives oxidative phosphorylation. The respiratory chain contains 3 multisubunit complexes succinate dehydrogenase (complex II, CII), ubiquinol-cytochrome c oxidoreductase (cytochrome b-c1 complex, complex III, CIII) and cytochrome c oxidase (complex IV, CIV), that cooperate to transfer electrons derived from NADH and succinate to molecular oxygen, creating an electrochemical gradient over the inner membrane that drives transmembrane transport and the ATP synthase. Cytochrome c oxidase is the component of the respiratory chain that catalyzes the reduction of oxygen to water. Electrons originating from reduced cytochrome c in the intermembrane space (IMS) are transferred via the dinuclear copper A center (CU(A)) of subunit 2 and heme A of subunit 1 to the active site in subunit 1, a binuclear center (BNC) formed by heme A3 and copper B (CU(B)). The BNC reduces molecular oxygen to 2 water molecules using 4 electrons from cytochrome c in the IMS and 4 protons from the mitochondrial matrix.</text>
</comment>
<comment type="catalytic activity">
    <reaction evidence="2">
        <text>4 Fe(II)-[cytochrome c] + O2 + 8 H(+)(in) = 4 Fe(III)-[cytochrome c] + 2 H2O + 4 H(+)(out)</text>
        <dbReference type="Rhea" id="RHEA:11436"/>
        <dbReference type="Rhea" id="RHEA-COMP:10350"/>
        <dbReference type="Rhea" id="RHEA-COMP:14399"/>
        <dbReference type="ChEBI" id="CHEBI:15377"/>
        <dbReference type="ChEBI" id="CHEBI:15378"/>
        <dbReference type="ChEBI" id="CHEBI:15379"/>
        <dbReference type="ChEBI" id="CHEBI:29033"/>
        <dbReference type="ChEBI" id="CHEBI:29034"/>
        <dbReference type="EC" id="7.1.1.9"/>
    </reaction>
    <physiologicalReaction direction="left-to-right" evidence="2">
        <dbReference type="Rhea" id="RHEA:11437"/>
    </physiologicalReaction>
</comment>
<comment type="cofactor">
    <cofactor evidence="3">
        <name>Cu cation</name>
        <dbReference type="ChEBI" id="CHEBI:23378"/>
    </cofactor>
    <text evidence="3">Binds a dinuclear copper A center per subunit.</text>
</comment>
<comment type="subunit">
    <text evidence="1 3">Component of the cytochrome c oxidase (complex IV, CIV), a multisubunit enzyme composed of 14 subunits. The complex is composed of a catalytic core of 3 subunits MT-CO1, MT-CO2 and MT-CO3, encoded in the mitochondrial DNA, and 11 supernumerary subunits COX4I, COX5A, COX5B, COX6A, COX6B, COX6C, COX7A, COX7B, COX7C, COX8 and NDUFA4, which are encoded in the nuclear genome. The complex exists as a monomer or a dimer and forms supercomplexes (SCs) in the inner mitochondrial membrane with NADH-ubiquinone oxidoreductase (complex I, CI) and ubiquinol-cytochrome c oxidoreductase (cytochrome b-c1 complex, complex III, CIII), resulting in different assemblies (supercomplex SCI(1)III(2)IV(1) and megacomplex MCI(2)III(2)IV(2)) (By similarity). Found in a complex with TMEM177, COA6, COX18, COX20, SCO1 and SCO2. Interacts with TMEM177 in a COX20-dependent manner. Interacts with COX20. Interacts with COX16 (By similarity).</text>
</comment>
<comment type="subcellular location">
    <subcellularLocation>
        <location evidence="3">Mitochondrion inner membrane</location>
        <topology evidence="3">Multi-pass membrane protein</topology>
    </subcellularLocation>
</comment>
<comment type="similarity">
    <text evidence="4">Belongs to the cytochrome c oxidase subunit 2 family.</text>
</comment>
<protein>
    <recommendedName>
        <fullName>Cytochrome c oxidase subunit 2</fullName>
        <ecNumber>7.1.1.9</ecNumber>
    </recommendedName>
    <alternativeName>
        <fullName>Cytochrome c oxidase polypeptide II</fullName>
    </alternativeName>
</protein>